<reference key="1">
    <citation type="submission" date="2005-09" db="EMBL/GenBank/DDBJ databases">
        <authorList>
            <consortium name="NIH - Mammalian Gene Collection (MGC) project"/>
        </authorList>
    </citation>
    <scope>NUCLEOTIDE SEQUENCE [LARGE SCALE MRNA]</scope>
    <source>
        <strain>Hereford</strain>
        <tissue>Ascending colon</tissue>
    </source>
</reference>
<comment type="function">
    <text evidence="1">Component of the 26S proteasome, a multiprotein complex involved in the ATP-dependent degradation of ubiquitinated proteins. This complex plays a key role in the maintenance of protein homeostasis by removing misfolded or damaged proteins, which could impair cellular functions, and by removing proteins whose functions are no longer required. Therefore, the proteasome participates in numerous cellular processes, including cell cycle progression, apoptosis, or DNA damage repair.</text>
</comment>
<comment type="subunit">
    <text evidence="1">Component of the 19S proteasome regulatory particle complex (By similarity). The 26S proteasome consists of a 20S core particle (CP) and two 19S regulatory subunits (RP) (By similarity). The regulatory particle is made of a lid composed of 9 subunits including PSMD3, a base containing 6 ATPases and few additional components (By similarity). Interacts with UBQLN1 (via ubiquitin-like domain) (By similarity). Interacts with ERCC6 (By similarity).</text>
</comment>
<comment type="similarity">
    <text evidence="4">Belongs to the proteasome subunit S3 family.</text>
</comment>
<accession>Q2KJ46</accession>
<protein>
    <recommendedName>
        <fullName>26S proteasome non-ATPase regulatory subunit 3</fullName>
    </recommendedName>
    <alternativeName>
        <fullName>26S proteasome regulatory subunit RPN3</fullName>
    </alternativeName>
</protein>
<organism>
    <name type="scientific">Bos taurus</name>
    <name type="common">Bovine</name>
    <dbReference type="NCBI Taxonomy" id="9913"/>
    <lineage>
        <taxon>Eukaryota</taxon>
        <taxon>Metazoa</taxon>
        <taxon>Chordata</taxon>
        <taxon>Craniata</taxon>
        <taxon>Vertebrata</taxon>
        <taxon>Euteleostomi</taxon>
        <taxon>Mammalia</taxon>
        <taxon>Eutheria</taxon>
        <taxon>Laurasiatheria</taxon>
        <taxon>Artiodactyla</taxon>
        <taxon>Ruminantia</taxon>
        <taxon>Pecora</taxon>
        <taxon>Bovidae</taxon>
        <taxon>Bovinae</taxon>
        <taxon>Bos</taxon>
    </lineage>
</organism>
<dbReference type="EMBL" id="BC105526">
    <property type="protein sequence ID" value="AAI05527.1"/>
    <property type="molecule type" value="mRNA"/>
</dbReference>
<dbReference type="RefSeq" id="NP_001039365.1">
    <property type="nucleotide sequence ID" value="NM_001045900.1"/>
</dbReference>
<dbReference type="SMR" id="Q2KJ46"/>
<dbReference type="BioGRID" id="161586">
    <property type="interactions" value="1"/>
</dbReference>
<dbReference type="FunCoup" id="Q2KJ46">
    <property type="interactions" value="4459"/>
</dbReference>
<dbReference type="STRING" id="9913.ENSBTAP00000028608"/>
<dbReference type="PaxDb" id="9913-ENSBTAP00000028608"/>
<dbReference type="PeptideAtlas" id="Q2KJ46"/>
<dbReference type="Ensembl" id="ENSBTAT00000028608.6">
    <property type="protein sequence ID" value="ENSBTAP00000028608.4"/>
    <property type="gene ID" value="ENSBTAG00000021461.6"/>
</dbReference>
<dbReference type="GeneID" id="504937"/>
<dbReference type="KEGG" id="bta:504937"/>
<dbReference type="CTD" id="5709"/>
<dbReference type="VEuPathDB" id="HostDB:ENSBTAG00000021461"/>
<dbReference type="VGNC" id="VGNC:33467">
    <property type="gene designation" value="PSMD3"/>
</dbReference>
<dbReference type="eggNOG" id="KOG2581">
    <property type="taxonomic scope" value="Eukaryota"/>
</dbReference>
<dbReference type="GeneTree" id="ENSGT00940000153653"/>
<dbReference type="HOGENOM" id="CLU_019858_1_2_1"/>
<dbReference type="InParanoid" id="Q2KJ46"/>
<dbReference type="OMA" id="AKVYFYF"/>
<dbReference type="OrthoDB" id="1713558at2759"/>
<dbReference type="TreeFam" id="TF106110"/>
<dbReference type="Reactome" id="R-BTA-1169091">
    <property type="pathway name" value="Activation of NF-kappaB in B cells"/>
</dbReference>
<dbReference type="Reactome" id="R-BTA-1234176">
    <property type="pathway name" value="Oxygen-dependent proline hydroxylation of Hypoxia-inducible Factor Alpha"/>
</dbReference>
<dbReference type="Reactome" id="R-BTA-1236978">
    <property type="pathway name" value="Cross-presentation of soluble exogenous antigens (endosomes)"/>
</dbReference>
<dbReference type="Reactome" id="R-BTA-174084">
    <property type="pathway name" value="Autodegradation of Cdh1 by Cdh1:APC/C"/>
</dbReference>
<dbReference type="Reactome" id="R-BTA-174154">
    <property type="pathway name" value="APC/C:Cdc20 mediated degradation of Securin"/>
</dbReference>
<dbReference type="Reactome" id="R-BTA-174178">
    <property type="pathway name" value="APC/C:Cdh1 mediated degradation of Cdc20 and other APC/C:Cdh1 targeted proteins in late mitosis/early G1"/>
</dbReference>
<dbReference type="Reactome" id="R-BTA-174184">
    <property type="pathway name" value="Cdc20:Phospho-APC/C mediated degradation of Cyclin A"/>
</dbReference>
<dbReference type="Reactome" id="R-BTA-187577">
    <property type="pathway name" value="SCF(Skp2)-mediated degradation of p27/p21"/>
</dbReference>
<dbReference type="Reactome" id="R-BTA-195253">
    <property type="pathway name" value="Degradation of beta-catenin by the destruction complex"/>
</dbReference>
<dbReference type="Reactome" id="R-BTA-202424">
    <property type="pathway name" value="Downstream TCR signaling"/>
</dbReference>
<dbReference type="Reactome" id="R-BTA-2467813">
    <property type="pathway name" value="Separation of Sister Chromatids"/>
</dbReference>
<dbReference type="Reactome" id="R-BTA-2871837">
    <property type="pathway name" value="FCERI mediated NF-kB activation"/>
</dbReference>
<dbReference type="Reactome" id="R-BTA-349425">
    <property type="pathway name" value="Autodegradation of the E3 ubiquitin ligase COP1"/>
</dbReference>
<dbReference type="Reactome" id="R-BTA-350562">
    <property type="pathway name" value="Regulation of ornithine decarboxylase (ODC)"/>
</dbReference>
<dbReference type="Reactome" id="R-BTA-382556">
    <property type="pathway name" value="ABC-family proteins mediated transport"/>
</dbReference>
<dbReference type="Reactome" id="R-BTA-450408">
    <property type="pathway name" value="AUF1 (hnRNP D0) binds and destabilizes mRNA"/>
</dbReference>
<dbReference type="Reactome" id="R-BTA-4608870">
    <property type="pathway name" value="Asymmetric localization of PCP proteins"/>
</dbReference>
<dbReference type="Reactome" id="R-BTA-4641257">
    <property type="pathway name" value="Degradation of AXIN"/>
</dbReference>
<dbReference type="Reactome" id="R-BTA-4641258">
    <property type="pathway name" value="Degradation of DVL"/>
</dbReference>
<dbReference type="Reactome" id="R-BTA-5358346">
    <property type="pathway name" value="Hedgehog ligand biogenesis"/>
</dbReference>
<dbReference type="Reactome" id="R-BTA-5607761">
    <property type="pathway name" value="Dectin-1 mediated noncanonical NF-kB signaling"/>
</dbReference>
<dbReference type="Reactome" id="R-BTA-5607764">
    <property type="pathway name" value="CLEC7A (Dectin-1) signaling"/>
</dbReference>
<dbReference type="Reactome" id="R-BTA-5610780">
    <property type="pathway name" value="Degradation of GLI1 by the proteasome"/>
</dbReference>
<dbReference type="Reactome" id="R-BTA-5610785">
    <property type="pathway name" value="GLI3 is processed to GLI3R by the proteasome"/>
</dbReference>
<dbReference type="Reactome" id="R-BTA-5632684">
    <property type="pathway name" value="Hedgehog 'on' state"/>
</dbReference>
<dbReference type="Reactome" id="R-BTA-5668541">
    <property type="pathway name" value="TNFR2 non-canonical NF-kB pathway"/>
</dbReference>
<dbReference type="Reactome" id="R-BTA-5676590">
    <property type="pathway name" value="NIK--&gt;noncanonical NF-kB signaling"/>
</dbReference>
<dbReference type="Reactome" id="R-BTA-5687128">
    <property type="pathway name" value="MAPK6/MAPK4 signaling"/>
</dbReference>
<dbReference type="Reactome" id="R-BTA-5689603">
    <property type="pathway name" value="UCH proteinases"/>
</dbReference>
<dbReference type="Reactome" id="R-BTA-5689880">
    <property type="pathway name" value="Ub-specific processing proteases"/>
</dbReference>
<dbReference type="Reactome" id="R-BTA-6798695">
    <property type="pathway name" value="Neutrophil degranulation"/>
</dbReference>
<dbReference type="Reactome" id="R-BTA-68867">
    <property type="pathway name" value="Assembly of the pre-replicative complex"/>
</dbReference>
<dbReference type="Reactome" id="R-BTA-68949">
    <property type="pathway name" value="Orc1 removal from chromatin"/>
</dbReference>
<dbReference type="Reactome" id="R-BTA-69017">
    <property type="pathway name" value="CDK-mediated phosphorylation and removal of Cdc6"/>
</dbReference>
<dbReference type="Reactome" id="R-BTA-69481">
    <property type="pathway name" value="G2/M Checkpoints"/>
</dbReference>
<dbReference type="Reactome" id="R-BTA-69601">
    <property type="pathway name" value="Ubiquitin Mediated Degradation of Phosphorylated Cdc25A"/>
</dbReference>
<dbReference type="Reactome" id="R-BTA-75815">
    <property type="pathway name" value="Ubiquitin-dependent degradation of Cyclin D"/>
</dbReference>
<dbReference type="Reactome" id="R-BTA-8852276">
    <property type="pathway name" value="The role of GTSE1 in G2/M progression after G2 checkpoint"/>
</dbReference>
<dbReference type="Reactome" id="R-BTA-8854050">
    <property type="pathway name" value="FBXL7 down-regulates AURKA during mitotic entry and in early mitosis"/>
</dbReference>
<dbReference type="Reactome" id="R-BTA-8939236">
    <property type="pathway name" value="RUNX1 regulates transcription of genes involved in differentiation of HSCs"/>
</dbReference>
<dbReference type="Reactome" id="R-BTA-8939902">
    <property type="pathway name" value="Regulation of RUNX2 expression and activity"/>
</dbReference>
<dbReference type="Reactome" id="R-BTA-8941858">
    <property type="pathway name" value="Regulation of RUNX3 expression and activity"/>
</dbReference>
<dbReference type="Reactome" id="R-BTA-8948751">
    <property type="pathway name" value="Regulation of PTEN stability and activity"/>
</dbReference>
<dbReference type="Reactome" id="R-BTA-8951664">
    <property type="pathway name" value="Neddylation"/>
</dbReference>
<dbReference type="Reactome" id="R-BTA-9020702">
    <property type="pathway name" value="Interleukin-1 signaling"/>
</dbReference>
<dbReference type="Reactome" id="R-BTA-9755511">
    <property type="pathway name" value="KEAP1-NFE2L2 pathway"/>
</dbReference>
<dbReference type="Reactome" id="R-BTA-9762114">
    <property type="pathway name" value="GSK3B and BTRC:CUL1-mediated-degradation of NFE2L2"/>
</dbReference>
<dbReference type="Reactome" id="R-BTA-983168">
    <property type="pathway name" value="Antigen processing: Ubiquitination &amp; Proteasome degradation"/>
</dbReference>
<dbReference type="Reactome" id="R-BTA-9907900">
    <property type="pathway name" value="Proteasome assembly"/>
</dbReference>
<dbReference type="Proteomes" id="UP000009136">
    <property type="component" value="Chromosome 19"/>
</dbReference>
<dbReference type="Bgee" id="ENSBTAG00000021461">
    <property type="expression patterns" value="Expressed in retina and 105 other cell types or tissues"/>
</dbReference>
<dbReference type="GO" id="GO:0005829">
    <property type="term" value="C:cytosol"/>
    <property type="evidence" value="ECO:0000304"/>
    <property type="project" value="Reactome"/>
</dbReference>
<dbReference type="GO" id="GO:0005654">
    <property type="term" value="C:nucleoplasm"/>
    <property type="evidence" value="ECO:0007669"/>
    <property type="project" value="Ensembl"/>
</dbReference>
<dbReference type="GO" id="GO:0022624">
    <property type="term" value="C:proteasome accessory complex"/>
    <property type="evidence" value="ECO:0000250"/>
    <property type="project" value="UniProtKB"/>
</dbReference>
<dbReference type="GO" id="GO:0008541">
    <property type="term" value="C:proteasome regulatory particle, lid subcomplex"/>
    <property type="evidence" value="ECO:0000318"/>
    <property type="project" value="GO_Central"/>
</dbReference>
<dbReference type="GO" id="GO:0030234">
    <property type="term" value="F:enzyme regulator activity"/>
    <property type="evidence" value="ECO:0007669"/>
    <property type="project" value="InterPro"/>
</dbReference>
<dbReference type="GO" id="GO:0042176">
    <property type="term" value="P:regulation of protein catabolic process"/>
    <property type="evidence" value="ECO:0007669"/>
    <property type="project" value="InterPro"/>
</dbReference>
<dbReference type="GO" id="GO:0006511">
    <property type="term" value="P:ubiquitin-dependent protein catabolic process"/>
    <property type="evidence" value="ECO:0000318"/>
    <property type="project" value="GO_Central"/>
</dbReference>
<dbReference type="FunFam" id="1.25.40.10:FF:000174">
    <property type="entry name" value="26S proteasome non-ATPase regulatory subunit 3"/>
    <property type="match status" value="1"/>
</dbReference>
<dbReference type="Gene3D" id="1.25.40.10">
    <property type="entry name" value="Tetratricopeptide repeat domain"/>
    <property type="match status" value="1"/>
</dbReference>
<dbReference type="InterPro" id="IPR013586">
    <property type="entry name" value="26S_Psome_reg_C"/>
</dbReference>
<dbReference type="InterPro" id="IPR050756">
    <property type="entry name" value="CSN3"/>
</dbReference>
<dbReference type="InterPro" id="IPR000717">
    <property type="entry name" value="PCI_dom"/>
</dbReference>
<dbReference type="InterPro" id="IPR011990">
    <property type="entry name" value="TPR-like_helical_dom_sf"/>
</dbReference>
<dbReference type="InterPro" id="IPR036390">
    <property type="entry name" value="WH_DNA-bd_sf"/>
</dbReference>
<dbReference type="PANTHER" id="PTHR10758:SF2">
    <property type="entry name" value="26S PROTEASOME NON-ATPASE REGULATORY SUBUNIT 3"/>
    <property type="match status" value="1"/>
</dbReference>
<dbReference type="PANTHER" id="PTHR10758">
    <property type="entry name" value="26S PROTEASOME NON-ATPASE REGULATORY SUBUNIT 3/COP9 SIGNALOSOME COMPLEX SUBUNIT 3"/>
    <property type="match status" value="1"/>
</dbReference>
<dbReference type="Pfam" id="PF01399">
    <property type="entry name" value="PCI"/>
    <property type="match status" value="1"/>
</dbReference>
<dbReference type="Pfam" id="PF08375">
    <property type="entry name" value="Rpn3_C"/>
    <property type="match status" value="1"/>
</dbReference>
<dbReference type="SMART" id="SM00753">
    <property type="entry name" value="PAM"/>
    <property type="match status" value="1"/>
</dbReference>
<dbReference type="SMART" id="SM00088">
    <property type="entry name" value="PINT"/>
    <property type="match status" value="1"/>
</dbReference>
<dbReference type="SUPFAM" id="SSF46785">
    <property type="entry name" value="Winged helix' DNA-binding domain"/>
    <property type="match status" value="1"/>
</dbReference>
<dbReference type="PROSITE" id="PS50250">
    <property type="entry name" value="PCI"/>
    <property type="match status" value="1"/>
</dbReference>
<evidence type="ECO:0000250" key="1">
    <source>
        <dbReference type="UniProtKB" id="O43242"/>
    </source>
</evidence>
<evidence type="ECO:0000255" key="2">
    <source>
        <dbReference type="PROSITE-ProRule" id="PRU01185"/>
    </source>
</evidence>
<evidence type="ECO:0000256" key="3">
    <source>
        <dbReference type="SAM" id="MobiDB-lite"/>
    </source>
</evidence>
<evidence type="ECO:0000305" key="4"/>
<proteinExistence type="evidence at transcript level"/>
<keyword id="KW-1017">Isopeptide bond</keyword>
<keyword id="KW-0597">Phosphoprotein</keyword>
<keyword id="KW-0647">Proteasome</keyword>
<keyword id="KW-1185">Reference proteome</keyword>
<keyword id="KW-0832">Ubl conjugation</keyword>
<name>PSMD3_BOVIN</name>
<gene>
    <name type="primary">PSMD3</name>
</gene>
<sequence>MKQEGSARRRGADKAKPPPGGGEQEPPPPPAPQDVEMKEEAAAGGGSTGETAGKTAAAAAEHSQRELDTVTLEDIKEHVKQLEKAVSGKEPRFVLRALRMLPSTSRRLNHYVLYKAVHGFFTSNNATRDFLLPFLEEPMDTEADLQFRPRTGKAASAPLLPEVEAYLQLLMVIFLMNSKRYKEAQKISDDLMQKISTQNRRALDLVAAKCYYYHARVYEFLDKLDVVRSFLHARLRTATLRHDTDGQATLLNLLLRNYLHYSLYDQAEKLVSKSVFPEQANNNEWARYLYYTGRIKAIQLEYSEARRTMTNALRKAPQHTAVGFKQTVHKLLIVVELLLGEIPDRLQFRQPSLKRSLMPYFLLTQAVRTGNLAKFNQVLDQFGEKFQADGTYTLIIRLRHNVIKTGVRMISLSYSRISLADIAQKLQLDSPEDAEFIVAKAIRDGVIEASINHEKGYVQSKEMIDIYSTREPQLAFHQRISFCLDIHNMSVKAMRFPPKSYNKDLESAEERREREQQDLEFAKEMAEDDDDSFP</sequence>
<feature type="chain" id="PRO_0000283070" description="26S proteasome non-ATPase regulatory subunit 3">
    <location>
        <begin position="1"/>
        <end position="534"/>
    </location>
</feature>
<feature type="domain" description="PCI" evidence="2">
    <location>
        <begin position="286"/>
        <end position="465"/>
    </location>
</feature>
<feature type="region of interest" description="Disordered" evidence="3">
    <location>
        <begin position="1"/>
        <end position="68"/>
    </location>
</feature>
<feature type="region of interest" description="Disordered" evidence="3">
    <location>
        <begin position="500"/>
        <end position="534"/>
    </location>
</feature>
<feature type="compositionally biased region" description="Basic and acidic residues" evidence="3">
    <location>
        <begin position="1"/>
        <end position="16"/>
    </location>
</feature>
<feature type="compositionally biased region" description="Pro residues" evidence="3">
    <location>
        <begin position="17"/>
        <end position="32"/>
    </location>
</feature>
<feature type="compositionally biased region" description="Low complexity" evidence="3">
    <location>
        <begin position="49"/>
        <end position="61"/>
    </location>
</feature>
<feature type="compositionally biased region" description="Basic and acidic residues" evidence="3">
    <location>
        <begin position="501"/>
        <end position="525"/>
    </location>
</feature>
<feature type="modified residue" description="Phosphoserine" evidence="1">
    <location>
        <position position="418"/>
    </location>
</feature>
<feature type="modified residue" description="Phosphoserine" evidence="1">
    <location>
        <position position="430"/>
    </location>
</feature>
<feature type="cross-link" description="Glycyl lysine isopeptide (Lys-Gly) (interchain with G-Cter in SUMO1); alternate" evidence="1">
    <location>
        <position position="38"/>
    </location>
</feature>
<feature type="cross-link" description="Glycyl lysine isopeptide (Lys-Gly) (interchain with G-Cter in SUMO2); alternate" evidence="1">
    <location>
        <position position="38"/>
    </location>
</feature>